<keyword id="KW-0687">Ribonucleoprotein</keyword>
<keyword id="KW-0689">Ribosomal protein</keyword>
<comment type="function">
    <text evidence="1">Involved in the binding of tRNA to the ribosomes.</text>
</comment>
<comment type="subunit">
    <text evidence="1">Part of the 30S ribosomal subunit.</text>
</comment>
<comment type="similarity">
    <text evidence="1">Belongs to the universal ribosomal protein uS10 family.</text>
</comment>
<proteinExistence type="inferred from homology"/>
<dbReference type="EMBL" id="CP000967">
    <property type="protein sequence ID" value="ACD57886.1"/>
    <property type="molecule type" value="Genomic_DNA"/>
</dbReference>
<dbReference type="RefSeq" id="WP_011409257.1">
    <property type="nucleotide sequence ID" value="NC_010717.2"/>
</dbReference>
<dbReference type="SMR" id="B2SQQ9"/>
<dbReference type="GeneID" id="77338714"/>
<dbReference type="KEGG" id="xop:PXO_04522"/>
<dbReference type="eggNOG" id="COG0051">
    <property type="taxonomic scope" value="Bacteria"/>
</dbReference>
<dbReference type="HOGENOM" id="CLU_122625_1_3_6"/>
<dbReference type="Proteomes" id="UP000001740">
    <property type="component" value="Chromosome"/>
</dbReference>
<dbReference type="GO" id="GO:1990904">
    <property type="term" value="C:ribonucleoprotein complex"/>
    <property type="evidence" value="ECO:0007669"/>
    <property type="project" value="UniProtKB-KW"/>
</dbReference>
<dbReference type="GO" id="GO:0005840">
    <property type="term" value="C:ribosome"/>
    <property type="evidence" value="ECO:0007669"/>
    <property type="project" value="UniProtKB-KW"/>
</dbReference>
<dbReference type="GO" id="GO:0003735">
    <property type="term" value="F:structural constituent of ribosome"/>
    <property type="evidence" value="ECO:0007669"/>
    <property type="project" value="InterPro"/>
</dbReference>
<dbReference type="GO" id="GO:0000049">
    <property type="term" value="F:tRNA binding"/>
    <property type="evidence" value="ECO:0007669"/>
    <property type="project" value="UniProtKB-UniRule"/>
</dbReference>
<dbReference type="GO" id="GO:0006412">
    <property type="term" value="P:translation"/>
    <property type="evidence" value="ECO:0007669"/>
    <property type="project" value="UniProtKB-UniRule"/>
</dbReference>
<dbReference type="FunFam" id="3.30.70.600:FF:000001">
    <property type="entry name" value="30S ribosomal protein S10"/>
    <property type="match status" value="1"/>
</dbReference>
<dbReference type="Gene3D" id="3.30.70.600">
    <property type="entry name" value="Ribosomal protein S10 domain"/>
    <property type="match status" value="1"/>
</dbReference>
<dbReference type="HAMAP" id="MF_00508">
    <property type="entry name" value="Ribosomal_uS10"/>
    <property type="match status" value="1"/>
</dbReference>
<dbReference type="InterPro" id="IPR001848">
    <property type="entry name" value="Ribosomal_uS10"/>
</dbReference>
<dbReference type="InterPro" id="IPR018268">
    <property type="entry name" value="Ribosomal_uS10_CS"/>
</dbReference>
<dbReference type="InterPro" id="IPR027486">
    <property type="entry name" value="Ribosomal_uS10_dom"/>
</dbReference>
<dbReference type="InterPro" id="IPR036838">
    <property type="entry name" value="Ribosomal_uS10_dom_sf"/>
</dbReference>
<dbReference type="NCBIfam" id="NF001861">
    <property type="entry name" value="PRK00596.1"/>
    <property type="match status" value="1"/>
</dbReference>
<dbReference type="NCBIfam" id="TIGR01049">
    <property type="entry name" value="rpsJ_bact"/>
    <property type="match status" value="1"/>
</dbReference>
<dbReference type="PANTHER" id="PTHR11700">
    <property type="entry name" value="30S RIBOSOMAL PROTEIN S10 FAMILY MEMBER"/>
    <property type="match status" value="1"/>
</dbReference>
<dbReference type="Pfam" id="PF00338">
    <property type="entry name" value="Ribosomal_S10"/>
    <property type="match status" value="1"/>
</dbReference>
<dbReference type="PRINTS" id="PR00971">
    <property type="entry name" value="RIBOSOMALS10"/>
</dbReference>
<dbReference type="SMART" id="SM01403">
    <property type="entry name" value="Ribosomal_S10"/>
    <property type="match status" value="1"/>
</dbReference>
<dbReference type="SUPFAM" id="SSF54999">
    <property type="entry name" value="Ribosomal protein S10"/>
    <property type="match status" value="1"/>
</dbReference>
<dbReference type="PROSITE" id="PS00361">
    <property type="entry name" value="RIBOSOMAL_S10"/>
    <property type="match status" value="1"/>
</dbReference>
<protein>
    <recommendedName>
        <fullName evidence="1">Small ribosomal subunit protein uS10</fullName>
    </recommendedName>
    <alternativeName>
        <fullName evidence="2">30S ribosomal protein S10</fullName>
    </alternativeName>
</protein>
<sequence length="104" mass="11944">MSEKQKIRIRLKAFDHRLIDRWASEIVETAKRTGAQVRGPIPLPTKIERYTILVSPHADKDARDQYETRTHKRVLDIVDPNDKTVDALMKLELAAGVDVQIKLT</sequence>
<organism>
    <name type="scientific">Xanthomonas oryzae pv. oryzae (strain PXO99A)</name>
    <dbReference type="NCBI Taxonomy" id="360094"/>
    <lineage>
        <taxon>Bacteria</taxon>
        <taxon>Pseudomonadati</taxon>
        <taxon>Pseudomonadota</taxon>
        <taxon>Gammaproteobacteria</taxon>
        <taxon>Lysobacterales</taxon>
        <taxon>Lysobacteraceae</taxon>
        <taxon>Xanthomonas</taxon>
    </lineage>
</organism>
<gene>
    <name evidence="1" type="primary">rpsJ</name>
    <name type="ordered locus">PXO_04522</name>
</gene>
<reference key="1">
    <citation type="journal article" date="2008" name="BMC Genomics">
        <title>Genome sequence and rapid evolution of the rice pathogen Xanthomonas oryzae pv. oryzae PXO99A.</title>
        <authorList>
            <person name="Salzberg S.L."/>
            <person name="Sommer D.D."/>
            <person name="Schatz M.C."/>
            <person name="Phillippy A.M."/>
            <person name="Rabinowicz P.D."/>
            <person name="Tsuge S."/>
            <person name="Furutani A."/>
            <person name="Ochiai H."/>
            <person name="Delcher A.L."/>
            <person name="Kelley D."/>
            <person name="Madupu R."/>
            <person name="Puiu D."/>
            <person name="Radune D."/>
            <person name="Shumway M."/>
            <person name="Trapnell C."/>
            <person name="Aparna G."/>
            <person name="Jha G."/>
            <person name="Pandey A."/>
            <person name="Patil P.B."/>
            <person name="Ishihara H."/>
            <person name="Meyer D.F."/>
            <person name="Szurek B."/>
            <person name="Verdier V."/>
            <person name="Koebnik R."/>
            <person name="Dow J.M."/>
            <person name="Ryan R.P."/>
            <person name="Hirata H."/>
            <person name="Tsuyumu S."/>
            <person name="Won Lee S."/>
            <person name="Seo Y.-S."/>
            <person name="Sriariyanum M."/>
            <person name="Ronald P.C."/>
            <person name="Sonti R.V."/>
            <person name="Van Sluys M.-A."/>
            <person name="Leach J.E."/>
            <person name="White F.F."/>
            <person name="Bogdanove A.J."/>
        </authorList>
    </citation>
    <scope>NUCLEOTIDE SEQUENCE [LARGE SCALE GENOMIC DNA]</scope>
    <source>
        <strain>PXO99A</strain>
    </source>
</reference>
<feature type="chain" id="PRO_1000127205" description="Small ribosomal subunit protein uS10">
    <location>
        <begin position="1"/>
        <end position="104"/>
    </location>
</feature>
<evidence type="ECO:0000255" key="1">
    <source>
        <dbReference type="HAMAP-Rule" id="MF_00508"/>
    </source>
</evidence>
<evidence type="ECO:0000305" key="2"/>
<name>RS10_XANOP</name>
<accession>B2SQQ9</accession>